<comment type="function">
    <text evidence="4">May be involved in the negative regulation of skeletal muscle differentiation, independently of its glycerophosphocholine phosphodiesterase activity.</text>
</comment>
<comment type="catalytic activity">
    <reaction evidence="4">
        <text>sn-glycerol 3-phosphocholine + H2O = sn-glycerol 3-phosphate + choline + H(+)</text>
        <dbReference type="Rhea" id="RHEA:16061"/>
        <dbReference type="ChEBI" id="CHEBI:15354"/>
        <dbReference type="ChEBI" id="CHEBI:15377"/>
        <dbReference type="ChEBI" id="CHEBI:15378"/>
        <dbReference type="ChEBI" id="CHEBI:16870"/>
        <dbReference type="ChEBI" id="CHEBI:57597"/>
        <dbReference type="EC" id="3.1.4.2"/>
    </reaction>
</comment>
<comment type="biophysicochemical properties">
    <kinetics>
        <Vmax evidence="4">2.0 umol/min/mg enzyme with glycerophosphocholine as substrate</Vmax>
        <Vmax evidence="4">0.34 umol/min/mg enzyme with glycerophosphoethanolamine as substrate</Vmax>
        <text>No significant reactions when glycerophosphoglycerol, glycerophosphoinositol and glycerophosphoserine are used as substrates.</text>
    </kinetics>
</comment>
<comment type="subcellular location">
    <subcellularLocation>
        <location evidence="4">Cytoplasm</location>
        <location evidence="4">Cytosol</location>
    </subcellularLocation>
</comment>
<comment type="alternative products">
    <event type="alternative splicing"/>
    <isoform>
        <id>Q8C0L9-1</id>
        <name>1</name>
        <sequence type="displayed"/>
    </isoform>
    <isoform>
        <id>Q8C0L9-2</id>
        <name>2</name>
        <sequence type="described" ref="VSP_020820"/>
    </isoform>
    <isoform>
        <id>Q8C0L9-3</id>
        <name>3</name>
        <sequence type="described" ref="VSP_020819"/>
    </isoform>
</comment>
<comment type="tissue specificity">
    <text evidence="4">Widely expressed with highest levels in skeletal muscle and heart.</text>
</comment>
<comment type="developmental stage">
    <text evidence="4">Down-regulated in skeletal muscles atrophies, including atrophies linked to aging and denervation.</text>
</comment>
<comment type="similarity">
    <text evidence="7">Belongs to the glycerophosphoryl diester phosphodiesterase family.</text>
</comment>
<comment type="sequence caution" evidence="7">
    <conflict type="erroneous initiation">
        <sequence resource="EMBL-CDS" id="BAB26361"/>
    </conflict>
    <text>Extended N-terminus.</text>
</comment>
<comment type="sequence caution" evidence="7">
    <conflict type="erroneous initiation">
        <sequence resource="EMBL-CDS" id="BAC33775"/>
    </conflict>
    <text>Truncated N-terminus.</text>
</comment>
<comment type="sequence caution" evidence="7">
    <conflict type="erroneous initiation">
        <sequence resource="EMBL-CDS" id="BAC34739"/>
    </conflict>
    <text>Truncated N-terminus.</text>
</comment>
<comment type="sequence caution" evidence="7">
    <conflict type="erroneous initiation">
        <sequence resource="EMBL-CDS" id="BAC65792"/>
    </conflict>
    <text>Extended N-terminus.</text>
</comment>
<keyword id="KW-0025">Alternative splicing</keyword>
<keyword id="KW-0963">Cytoplasm</keyword>
<keyword id="KW-0378">Hydrolase</keyword>
<keyword id="KW-0597">Phosphoprotein</keyword>
<keyword id="KW-1185">Reference proteome</keyword>
<protein>
    <recommendedName>
        <fullName>Glycerophosphocholine phosphodiesterase GPCPD1</fullName>
        <ecNumber>3.1.4.2</ecNumber>
    </recommendedName>
    <alternativeName>
        <fullName>Glycerophosphodiester phosphodiesterase 5</fullName>
    </alternativeName>
    <alternativeName>
        <fullName>Preimplantation protein 4</fullName>
    </alternativeName>
</protein>
<proteinExistence type="evidence at protein level"/>
<evidence type="ECO:0000250" key="1">
    <source>
        <dbReference type="UniProtKB" id="Q9NPB8"/>
    </source>
</evidence>
<evidence type="ECO:0000255" key="2"/>
<evidence type="ECO:0000255" key="3">
    <source>
        <dbReference type="PROSITE-ProRule" id="PRU00594"/>
    </source>
</evidence>
<evidence type="ECO:0000269" key="4">
    <source>
    </source>
</evidence>
<evidence type="ECO:0000303" key="5">
    <source>
    </source>
</evidence>
<evidence type="ECO:0000303" key="6">
    <source>
    </source>
</evidence>
<evidence type="ECO:0000305" key="7"/>
<evidence type="ECO:0007744" key="8">
    <source>
    </source>
</evidence>
<evidence type="ECO:0007744" key="9">
    <source>
    </source>
</evidence>
<sequence>MTPSQVTFEIRGTLLPGEVFAICGSCDALGNWNPQNAVALINENETGDSVLWKAVIALNRGVSVKYRYFRGCFLEPKTIGGPCQVIVHKWETHLQPRSITPLESEIIIDDGQFGIHNGVETLDSGWLTCQTEIRLRLHFSEKPPVSISKKKFKKSRFRVKLTLEGLEEDEDDDDDKVSPTVLHKMSNSLEISLISDNEFKCRHSQPECGYGLQPDRWTEYSIQTMEPDNLELIFDFFEEDLSEHVVQGDVLPGHVGTACLLSSTIAESGRSAGILTLPIMSRNSRKTIGKVRVDFIIIKPLPGYSCSMQSSFSKYWKPRIPLDVGHRGAGNSTTTAKLAKVQENTIASLRNAASHGAAFVEFDVHLSKDFVPVVYHDLTCCLTMKRKYEADPVELFEIPVKELTFDQLQLLKLSHVTALKTKDRKQSLYEEENFFSENQPFPSLKMVLESLPENVGFNIEIKWICQHRDGVWDGNLSTYFDMNVFLDIILKTVLENSGKRRIVFSSFDADICTMVRQKQNKYPILFLTQGKSDIYPELMDLRSRTTPIAMSFAQFENILGINAHTEDLLRNPSYVQEAKAKGLVIFCWGDDTNDPENRRKLKEFGVNGLIYDRIYDWMPEQPNIFQVEQLERLKQELPELKNCLCPTVSHFIPSSFCVEPDIHVDANGIDSVENA</sequence>
<gene>
    <name type="primary">Gpcpd1</name>
    <name type="synonym">Gde5</name>
    <name type="synonym">Kiaa1434</name>
    <name type="synonym">Prei4</name>
</gene>
<dbReference type="EC" id="3.1.4.2"/>
<dbReference type="EMBL" id="AK122510">
    <property type="protein sequence ID" value="BAC65792.1"/>
    <property type="status" value="ALT_INIT"/>
    <property type="molecule type" value="mRNA"/>
</dbReference>
<dbReference type="EMBL" id="AK009563">
    <property type="protein sequence ID" value="BAB26361.2"/>
    <property type="status" value="ALT_INIT"/>
    <property type="molecule type" value="mRNA"/>
</dbReference>
<dbReference type="EMBL" id="AK030645">
    <property type="protein sequence ID" value="BAC27063.1"/>
    <property type="molecule type" value="mRNA"/>
</dbReference>
<dbReference type="EMBL" id="AK049491">
    <property type="protein sequence ID" value="BAC33775.1"/>
    <property type="status" value="ALT_INIT"/>
    <property type="molecule type" value="mRNA"/>
</dbReference>
<dbReference type="EMBL" id="AK051728">
    <property type="protein sequence ID" value="BAC34739.1"/>
    <property type="status" value="ALT_INIT"/>
    <property type="molecule type" value="mRNA"/>
</dbReference>
<dbReference type="EMBL" id="AK166293">
    <property type="protein sequence ID" value="BAE38686.1"/>
    <property type="molecule type" value="mRNA"/>
</dbReference>
<dbReference type="EMBL" id="AL807386">
    <property type="status" value="NOT_ANNOTATED_CDS"/>
    <property type="molecule type" value="Genomic_DNA"/>
</dbReference>
<dbReference type="EMBL" id="BC033408">
    <property type="protein sequence ID" value="AAH33408.1"/>
    <property type="molecule type" value="mRNA"/>
</dbReference>
<dbReference type="CCDS" id="CCDS38246.1">
    <molecule id="Q8C0L9-1"/>
</dbReference>
<dbReference type="CCDS" id="CCDS71151.1">
    <molecule id="Q8C0L9-2"/>
</dbReference>
<dbReference type="RefSeq" id="NP_001277979.1">
    <molecule id="Q8C0L9-2"/>
    <property type="nucleotide sequence ID" value="NM_001291050.1"/>
</dbReference>
<dbReference type="RefSeq" id="NP_001277980.1">
    <molecule id="Q8C0L9-2"/>
    <property type="nucleotide sequence ID" value="NM_001291051.1"/>
</dbReference>
<dbReference type="RefSeq" id="NP_001277981.1">
    <molecule id="Q8C0L9-2"/>
    <property type="nucleotide sequence ID" value="NM_001291052.1"/>
</dbReference>
<dbReference type="RefSeq" id="NP_001342577.1">
    <molecule id="Q8C0L9-2"/>
    <property type="nucleotide sequence ID" value="NM_001355648.1"/>
</dbReference>
<dbReference type="RefSeq" id="NP_001342580.1">
    <molecule id="Q8C0L9-1"/>
    <property type="nucleotide sequence ID" value="NM_001355651.1"/>
</dbReference>
<dbReference type="RefSeq" id="NP_081372.1">
    <molecule id="Q8C0L9-2"/>
    <property type="nucleotide sequence ID" value="NM_027096.2"/>
</dbReference>
<dbReference type="RefSeq" id="NP_083078.3">
    <molecule id="Q8C0L9-1"/>
    <property type="nucleotide sequence ID" value="NM_028802.3"/>
</dbReference>
<dbReference type="RefSeq" id="XP_011238111.1">
    <property type="nucleotide sequence ID" value="XM_011239809.2"/>
</dbReference>
<dbReference type="RefSeq" id="XP_017174784.1">
    <property type="nucleotide sequence ID" value="XM_017319295.1"/>
</dbReference>
<dbReference type="RefSeq" id="XP_030107992.1">
    <molecule id="Q8C0L9-2"/>
    <property type="nucleotide sequence ID" value="XM_030252132.1"/>
</dbReference>
<dbReference type="SMR" id="Q8C0L9"/>
<dbReference type="FunCoup" id="Q8C0L9">
    <property type="interactions" value="2096"/>
</dbReference>
<dbReference type="STRING" id="10090.ENSMUSP00000105769"/>
<dbReference type="CAZy" id="CBM20">
    <property type="family name" value="Carbohydrate-Binding Module Family 20"/>
</dbReference>
<dbReference type="GlyGen" id="Q8C0L9">
    <property type="glycosylation" value="1 site, 1 O-linked glycan (1 site)"/>
</dbReference>
<dbReference type="iPTMnet" id="Q8C0L9"/>
<dbReference type="PhosphoSitePlus" id="Q8C0L9"/>
<dbReference type="SwissPalm" id="Q8C0L9"/>
<dbReference type="jPOST" id="Q8C0L9"/>
<dbReference type="PaxDb" id="10090-ENSMUSP00000105769"/>
<dbReference type="PeptideAtlas" id="Q8C0L9"/>
<dbReference type="ProteomicsDB" id="271434">
    <molecule id="Q8C0L9-1"/>
</dbReference>
<dbReference type="ProteomicsDB" id="271435">
    <molecule id="Q8C0L9-2"/>
</dbReference>
<dbReference type="ProteomicsDB" id="271436">
    <molecule id="Q8C0L9-3"/>
</dbReference>
<dbReference type="Pumba" id="Q8C0L9"/>
<dbReference type="Antibodypedia" id="23917">
    <property type="antibodies" value="22 antibodies from 9 providers"/>
</dbReference>
<dbReference type="DNASU" id="74182"/>
<dbReference type="Ensembl" id="ENSMUST00000060955.12">
    <molecule id="Q8C0L9-1"/>
    <property type="protein sequence ID" value="ENSMUSP00000062221.6"/>
    <property type="gene ID" value="ENSMUSG00000027346.16"/>
</dbReference>
<dbReference type="Ensembl" id="ENSMUST00000110136.8">
    <molecule id="Q8C0L9-2"/>
    <property type="protein sequence ID" value="ENSMUSP00000105763.2"/>
    <property type="gene ID" value="ENSMUSG00000027346.16"/>
</dbReference>
<dbReference type="Ensembl" id="ENSMUST00000110142.8">
    <molecule id="Q8C0L9-1"/>
    <property type="protein sequence ID" value="ENSMUSP00000105769.2"/>
    <property type="gene ID" value="ENSMUSG00000027346.16"/>
</dbReference>
<dbReference type="GeneID" id="74182"/>
<dbReference type="KEGG" id="mmu:74182"/>
<dbReference type="UCSC" id="uc008mmv.2">
    <molecule id="Q8C0L9-1"/>
    <property type="organism name" value="mouse"/>
</dbReference>
<dbReference type="AGR" id="MGI:104898"/>
<dbReference type="CTD" id="56261"/>
<dbReference type="MGI" id="MGI:104898">
    <property type="gene designation" value="Gpcpd1"/>
</dbReference>
<dbReference type="VEuPathDB" id="HostDB:ENSMUSG00000027346"/>
<dbReference type="eggNOG" id="KOG2421">
    <property type="taxonomic scope" value="Eukaryota"/>
</dbReference>
<dbReference type="GeneTree" id="ENSGT00440000033970"/>
<dbReference type="HOGENOM" id="CLU_013007_2_0_1"/>
<dbReference type="InParanoid" id="Q8C0L9"/>
<dbReference type="OMA" id="LKVYHTA"/>
<dbReference type="PhylomeDB" id="Q8C0L9"/>
<dbReference type="TreeFam" id="TF314722"/>
<dbReference type="BioGRID-ORCS" id="74182">
    <property type="hits" value="1 hit in 78 CRISPR screens"/>
</dbReference>
<dbReference type="ChiTaRS" id="Gpcpd1">
    <property type="organism name" value="mouse"/>
</dbReference>
<dbReference type="PRO" id="PR:Q8C0L9"/>
<dbReference type="Proteomes" id="UP000000589">
    <property type="component" value="Chromosome 2"/>
</dbReference>
<dbReference type="RNAct" id="Q8C0L9">
    <property type="molecule type" value="protein"/>
</dbReference>
<dbReference type="Bgee" id="ENSMUSG00000027346">
    <property type="expression patterns" value="Expressed in triceps brachii and 258 other cell types or tissues"/>
</dbReference>
<dbReference type="ExpressionAtlas" id="Q8C0L9">
    <property type="expression patterns" value="baseline and differential"/>
</dbReference>
<dbReference type="GO" id="GO:0005737">
    <property type="term" value="C:cytoplasm"/>
    <property type="evidence" value="ECO:0000314"/>
    <property type="project" value="MGI"/>
</dbReference>
<dbReference type="GO" id="GO:0005829">
    <property type="term" value="C:cytosol"/>
    <property type="evidence" value="ECO:0000304"/>
    <property type="project" value="Reactome"/>
</dbReference>
<dbReference type="GO" id="GO:0047389">
    <property type="term" value="F:glycerophosphocholine phosphodiesterase activity"/>
    <property type="evidence" value="ECO:0000314"/>
    <property type="project" value="MGI"/>
</dbReference>
<dbReference type="GO" id="GO:0008889">
    <property type="term" value="F:glycerophosphodiester phosphodiesterase activity"/>
    <property type="evidence" value="ECO:0000304"/>
    <property type="project" value="Reactome"/>
</dbReference>
<dbReference type="GO" id="GO:2001070">
    <property type="term" value="F:starch binding"/>
    <property type="evidence" value="ECO:0007669"/>
    <property type="project" value="InterPro"/>
</dbReference>
<dbReference type="GO" id="GO:0006629">
    <property type="term" value="P:lipid metabolic process"/>
    <property type="evidence" value="ECO:0007669"/>
    <property type="project" value="InterPro"/>
</dbReference>
<dbReference type="GO" id="GO:0007519">
    <property type="term" value="P:skeletal muscle tissue development"/>
    <property type="evidence" value="ECO:0000315"/>
    <property type="project" value="MGI"/>
</dbReference>
<dbReference type="CDD" id="cd05814">
    <property type="entry name" value="CBM20_Prei4"/>
    <property type="match status" value="1"/>
</dbReference>
<dbReference type="CDD" id="cd08607">
    <property type="entry name" value="GDPD_GDE5"/>
    <property type="match status" value="1"/>
</dbReference>
<dbReference type="FunFam" id="3.20.20.190:FF:000015">
    <property type="entry name" value="Glycerophosphocholine phosphodiesterase GPCPD1"/>
    <property type="match status" value="1"/>
</dbReference>
<dbReference type="FunFam" id="2.60.40.10:FF:000752">
    <property type="entry name" value="Putative glycerophosphocholine phosphodiesterase GPCPD1"/>
    <property type="match status" value="1"/>
</dbReference>
<dbReference type="Gene3D" id="2.60.40.10">
    <property type="entry name" value="Immunoglobulins"/>
    <property type="match status" value="1"/>
</dbReference>
<dbReference type="Gene3D" id="3.20.20.190">
    <property type="entry name" value="Phosphatidylinositol (PI) phosphodiesterase"/>
    <property type="match status" value="1"/>
</dbReference>
<dbReference type="InterPro" id="IPR013784">
    <property type="entry name" value="Carb-bd-like_fold"/>
</dbReference>
<dbReference type="InterPro" id="IPR002044">
    <property type="entry name" value="CBM20"/>
</dbReference>
<dbReference type="InterPro" id="IPR034839">
    <property type="entry name" value="CBM20_GPCPD1"/>
</dbReference>
<dbReference type="InterPro" id="IPR051578">
    <property type="entry name" value="GDPD"/>
</dbReference>
<dbReference type="InterPro" id="IPR030395">
    <property type="entry name" value="GP_PDE_dom"/>
</dbReference>
<dbReference type="InterPro" id="IPR013783">
    <property type="entry name" value="Ig-like_fold"/>
</dbReference>
<dbReference type="InterPro" id="IPR017946">
    <property type="entry name" value="PLC-like_Pdiesterase_TIM-brl"/>
</dbReference>
<dbReference type="PANTHER" id="PTHR22958:SF1">
    <property type="entry name" value="GLYCEROPHOSPHOCHOLINE PHOSPHODIESTERASE GPCPD1"/>
    <property type="match status" value="1"/>
</dbReference>
<dbReference type="PANTHER" id="PTHR22958">
    <property type="entry name" value="GLYCEROPHOSPHORYL DIESTER PHOSPHODIESTERASE"/>
    <property type="match status" value="1"/>
</dbReference>
<dbReference type="Pfam" id="PF25329">
    <property type="entry name" value="C2_GDE1"/>
    <property type="match status" value="1"/>
</dbReference>
<dbReference type="Pfam" id="PF00686">
    <property type="entry name" value="CBM_20"/>
    <property type="match status" value="1"/>
</dbReference>
<dbReference type="Pfam" id="PF03009">
    <property type="entry name" value="GDPD"/>
    <property type="match status" value="1"/>
</dbReference>
<dbReference type="SMART" id="SM01065">
    <property type="entry name" value="CBM_2"/>
    <property type="match status" value="1"/>
</dbReference>
<dbReference type="SUPFAM" id="SSF51695">
    <property type="entry name" value="PLC-like phosphodiesterases"/>
    <property type="match status" value="1"/>
</dbReference>
<dbReference type="SUPFAM" id="SSF49452">
    <property type="entry name" value="Starch-binding domain-like"/>
    <property type="match status" value="1"/>
</dbReference>
<dbReference type="PROSITE" id="PS51166">
    <property type="entry name" value="CBM20"/>
    <property type="match status" value="1"/>
</dbReference>
<dbReference type="PROSITE" id="PS51704">
    <property type="entry name" value="GP_PDE"/>
    <property type="match status" value="1"/>
</dbReference>
<name>GPCP1_MOUSE</name>
<accession>Q8C0L9</accession>
<accession>A2AMD5</accession>
<accession>Q3TLV6</accession>
<accession>Q80TD5</accession>
<accession>Q8BKJ7</accession>
<accession>Q8BKW7</accession>
<accession>Q8CFW2</accession>
<accession>Q9D759</accession>
<reference key="1">
    <citation type="journal article" date="2003" name="DNA Res.">
        <title>Prediction of the coding sequences of mouse homologues of KIAA gene: II. The complete nucleotide sequences of 400 mouse KIAA-homologous cDNAs identified by screening of terminal sequences of cDNA clones randomly sampled from size-fractionated libraries.</title>
        <authorList>
            <person name="Okazaki N."/>
            <person name="Kikuno R."/>
            <person name="Ohara R."/>
            <person name="Inamoto S."/>
            <person name="Aizawa H."/>
            <person name="Yuasa S."/>
            <person name="Nakajima D."/>
            <person name="Nagase T."/>
            <person name="Ohara O."/>
            <person name="Koga H."/>
        </authorList>
    </citation>
    <scope>NUCLEOTIDE SEQUENCE [LARGE SCALE MRNA] (ISOFORM 3)</scope>
    <source>
        <tissue>Brain</tissue>
    </source>
</reference>
<reference key="2">
    <citation type="journal article" date="2005" name="Science">
        <title>The transcriptional landscape of the mammalian genome.</title>
        <authorList>
            <person name="Carninci P."/>
            <person name="Kasukawa T."/>
            <person name="Katayama S."/>
            <person name="Gough J."/>
            <person name="Frith M.C."/>
            <person name="Maeda N."/>
            <person name="Oyama R."/>
            <person name="Ravasi T."/>
            <person name="Lenhard B."/>
            <person name="Wells C."/>
            <person name="Kodzius R."/>
            <person name="Shimokawa K."/>
            <person name="Bajic V.B."/>
            <person name="Brenner S.E."/>
            <person name="Batalov S."/>
            <person name="Forrest A.R."/>
            <person name="Zavolan M."/>
            <person name="Davis M.J."/>
            <person name="Wilming L.G."/>
            <person name="Aidinis V."/>
            <person name="Allen J.E."/>
            <person name="Ambesi-Impiombato A."/>
            <person name="Apweiler R."/>
            <person name="Aturaliya R.N."/>
            <person name="Bailey T.L."/>
            <person name="Bansal M."/>
            <person name="Baxter L."/>
            <person name="Beisel K.W."/>
            <person name="Bersano T."/>
            <person name="Bono H."/>
            <person name="Chalk A.M."/>
            <person name="Chiu K.P."/>
            <person name="Choudhary V."/>
            <person name="Christoffels A."/>
            <person name="Clutterbuck D.R."/>
            <person name="Crowe M.L."/>
            <person name="Dalla E."/>
            <person name="Dalrymple B.P."/>
            <person name="de Bono B."/>
            <person name="Della Gatta G."/>
            <person name="di Bernardo D."/>
            <person name="Down T."/>
            <person name="Engstrom P."/>
            <person name="Fagiolini M."/>
            <person name="Faulkner G."/>
            <person name="Fletcher C.F."/>
            <person name="Fukushima T."/>
            <person name="Furuno M."/>
            <person name="Futaki S."/>
            <person name="Gariboldi M."/>
            <person name="Georgii-Hemming P."/>
            <person name="Gingeras T.R."/>
            <person name="Gojobori T."/>
            <person name="Green R.E."/>
            <person name="Gustincich S."/>
            <person name="Harbers M."/>
            <person name="Hayashi Y."/>
            <person name="Hensch T.K."/>
            <person name="Hirokawa N."/>
            <person name="Hill D."/>
            <person name="Huminiecki L."/>
            <person name="Iacono M."/>
            <person name="Ikeo K."/>
            <person name="Iwama A."/>
            <person name="Ishikawa T."/>
            <person name="Jakt M."/>
            <person name="Kanapin A."/>
            <person name="Katoh M."/>
            <person name="Kawasawa Y."/>
            <person name="Kelso J."/>
            <person name="Kitamura H."/>
            <person name="Kitano H."/>
            <person name="Kollias G."/>
            <person name="Krishnan S.P."/>
            <person name="Kruger A."/>
            <person name="Kummerfeld S.K."/>
            <person name="Kurochkin I.V."/>
            <person name="Lareau L.F."/>
            <person name="Lazarevic D."/>
            <person name="Lipovich L."/>
            <person name="Liu J."/>
            <person name="Liuni S."/>
            <person name="McWilliam S."/>
            <person name="Madan Babu M."/>
            <person name="Madera M."/>
            <person name="Marchionni L."/>
            <person name="Matsuda H."/>
            <person name="Matsuzawa S."/>
            <person name="Miki H."/>
            <person name="Mignone F."/>
            <person name="Miyake S."/>
            <person name="Morris K."/>
            <person name="Mottagui-Tabar S."/>
            <person name="Mulder N."/>
            <person name="Nakano N."/>
            <person name="Nakauchi H."/>
            <person name="Ng P."/>
            <person name="Nilsson R."/>
            <person name="Nishiguchi S."/>
            <person name="Nishikawa S."/>
            <person name="Nori F."/>
            <person name="Ohara O."/>
            <person name="Okazaki Y."/>
            <person name="Orlando V."/>
            <person name="Pang K.C."/>
            <person name="Pavan W.J."/>
            <person name="Pavesi G."/>
            <person name="Pesole G."/>
            <person name="Petrovsky N."/>
            <person name="Piazza S."/>
            <person name="Reed J."/>
            <person name="Reid J.F."/>
            <person name="Ring B.Z."/>
            <person name="Ringwald M."/>
            <person name="Rost B."/>
            <person name="Ruan Y."/>
            <person name="Salzberg S.L."/>
            <person name="Sandelin A."/>
            <person name="Schneider C."/>
            <person name="Schoenbach C."/>
            <person name="Sekiguchi K."/>
            <person name="Semple C.A."/>
            <person name="Seno S."/>
            <person name="Sessa L."/>
            <person name="Sheng Y."/>
            <person name="Shibata Y."/>
            <person name="Shimada H."/>
            <person name="Shimada K."/>
            <person name="Silva D."/>
            <person name="Sinclair B."/>
            <person name="Sperling S."/>
            <person name="Stupka E."/>
            <person name="Sugiura K."/>
            <person name="Sultana R."/>
            <person name="Takenaka Y."/>
            <person name="Taki K."/>
            <person name="Tammoja K."/>
            <person name="Tan S.L."/>
            <person name="Tang S."/>
            <person name="Taylor M.S."/>
            <person name="Tegner J."/>
            <person name="Teichmann S.A."/>
            <person name="Ueda H.R."/>
            <person name="van Nimwegen E."/>
            <person name="Verardo R."/>
            <person name="Wei C.L."/>
            <person name="Yagi K."/>
            <person name="Yamanishi H."/>
            <person name="Zabarovsky E."/>
            <person name="Zhu S."/>
            <person name="Zimmer A."/>
            <person name="Hide W."/>
            <person name="Bult C."/>
            <person name="Grimmond S.M."/>
            <person name="Teasdale R.D."/>
            <person name="Liu E.T."/>
            <person name="Brusic V."/>
            <person name="Quackenbush J."/>
            <person name="Wahlestedt C."/>
            <person name="Mattick J.S."/>
            <person name="Hume D.A."/>
            <person name="Kai C."/>
            <person name="Sasaki D."/>
            <person name="Tomaru Y."/>
            <person name="Fukuda S."/>
            <person name="Kanamori-Katayama M."/>
            <person name="Suzuki M."/>
            <person name="Aoki J."/>
            <person name="Arakawa T."/>
            <person name="Iida J."/>
            <person name="Imamura K."/>
            <person name="Itoh M."/>
            <person name="Kato T."/>
            <person name="Kawaji H."/>
            <person name="Kawagashira N."/>
            <person name="Kawashima T."/>
            <person name="Kojima M."/>
            <person name="Kondo S."/>
            <person name="Konno H."/>
            <person name="Nakano K."/>
            <person name="Ninomiya N."/>
            <person name="Nishio T."/>
            <person name="Okada M."/>
            <person name="Plessy C."/>
            <person name="Shibata K."/>
            <person name="Shiraki T."/>
            <person name="Suzuki S."/>
            <person name="Tagami M."/>
            <person name="Waki K."/>
            <person name="Watahiki A."/>
            <person name="Okamura-Oho Y."/>
            <person name="Suzuki H."/>
            <person name="Kawai J."/>
            <person name="Hayashizaki Y."/>
        </authorList>
    </citation>
    <scope>NUCLEOTIDE SEQUENCE [LARGE SCALE MRNA] (ISOFORM 1)</scope>
    <source>
        <strain>C57BL/6J</strain>
        <tissue>Embryo</tissue>
        <tissue>Embryonic spinal ganglion</tissue>
        <tissue>Head</tissue>
        <tissue>Mammary gland</tissue>
        <tissue>Tongue</tissue>
    </source>
</reference>
<reference key="3">
    <citation type="journal article" date="2009" name="PLoS Biol.">
        <title>Lineage-specific biology revealed by a finished genome assembly of the mouse.</title>
        <authorList>
            <person name="Church D.M."/>
            <person name="Goodstadt L."/>
            <person name="Hillier L.W."/>
            <person name="Zody M.C."/>
            <person name="Goldstein S."/>
            <person name="She X."/>
            <person name="Bult C.J."/>
            <person name="Agarwala R."/>
            <person name="Cherry J.L."/>
            <person name="DiCuccio M."/>
            <person name="Hlavina W."/>
            <person name="Kapustin Y."/>
            <person name="Meric P."/>
            <person name="Maglott D."/>
            <person name="Birtle Z."/>
            <person name="Marques A.C."/>
            <person name="Graves T."/>
            <person name="Zhou S."/>
            <person name="Teague B."/>
            <person name="Potamousis K."/>
            <person name="Churas C."/>
            <person name="Place M."/>
            <person name="Herschleb J."/>
            <person name="Runnheim R."/>
            <person name="Forrest D."/>
            <person name="Amos-Landgraf J."/>
            <person name="Schwartz D.C."/>
            <person name="Cheng Z."/>
            <person name="Lindblad-Toh K."/>
            <person name="Eichler E.E."/>
            <person name="Ponting C.P."/>
        </authorList>
    </citation>
    <scope>NUCLEOTIDE SEQUENCE [LARGE SCALE GENOMIC DNA]</scope>
    <source>
        <strain>C57BL/6J</strain>
    </source>
</reference>
<reference key="4">
    <citation type="journal article" date="2004" name="Genome Res.">
        <title>The status, quality, and expansion of the NIH full-length cDNA project: the Mammalian Gene Collection (MGC).</title>
        <authorList>
            <consortium name="The MGC Project Team"/>
        </authorList>
    </citation>
    <scope>NUCLEOTIDE SEQUENCE [LARGE SCALE MRNA] (ISOFORM 2)</scope>
    <source>
        <tissue>Eye</tissue>
    </source>
</reference>
<reference key="5">
    <citation type="journal article" date="2008" name="J. Proteome Res.">
        <title>Large-scale identification and evolution indexing of tyrosine phosphorylation sites from murine brain.</title>
        <authorList>
            <person name="Ballif B.A."/>
            <person name="Carey G.R."/>
            <person name="Sunyaev S.R."/>
            <person name="Gygi S.P."/>
        </authorList>
    </citation>
    <scope>PHOSPHORYLATION [LARGE SCALE ANALYSIS] AT TYR-611</scope>
    <scope>IDENTIFICATION BY MASS SPECTROMETRY [LARGE SCALE ANALYSIS]</scope>
    <source>
        <tissue>Brain</tissue>
    </source>
</reference>
<reference key="6">
    <citation type="journal article" date="2010" name="Cell">
        <title>A tissue-specific atlas of mouse protein phosphorylation and expression.</title>
        <authorList>
            <person name="Huttlin E.L."/>
            <person name="Jedrychowski M.P."/>
            <person name="Elias J.E."/>
            <person name="Goswami T."/>
            <person name="Rad R."/>
            <person name="Beausoleil S.A."/>
            <person name="Villen J."/>
            <person name="Haas W."/>
            <person name="Sowa M.E."/>
            <person name="Gygi S.P."/>
        </authorList>
    </citation>
    <scope>PHOSPHORYLATION [LARGE SCALE ANALYSIS] AT SER-427</scope>
    <scope>IDENTIFICATION BY MASS SPECTROMETRY [LARGE SCALE ANALYSIS]</scope>
    <source>
        <tissue>Brain</tissue>
        <tissue>Brown adipose tissue</tissue>
        <tissue>Heart</tissue>
        <tissue>Kidney</tissue>
        <tissue>Liver</tissue>
        <tissue>Lung</tissue>
        <tissue>Spleen</tissue>
        <tissue>Testis</tissue>
    </source>
</reference>
<reference key="7">
    <citation type="journal article" date="2010" name="J. Biol. Chem.">
        <title>A novel glycerophosphodiester phosphodiesterase, GDE5, controls skeletal muscle development via a non-enzymatic mechanism.</title>
        <authorList>
            <person name="Okazaki Y."/>
            <person name="Ohshima N."/>
            <person name="Yoshizawa I."/>
            <person name="Kamei Y."/>
            <person name="Mariggio S."/>
            <person name="Okamoto K."/>
            <person name="Maeda M."/>
            <person name="Nogusa Y."/>
            <person name="Fujioka Y."/>
            <person name="Izumi T."/>
            <person name="Ogawa Y."/>
            <person name="Shiro Y."/>
            <person name="Wada M."/>
            <person name="Kato N."/>
            <person name="Corda D."/>
            <person name="Yanaka N."/>
        </authorList>
    </citation>
    <scope>FUNCTION</scope>
    <scope>CATALYTIC ACTIVITY</scope>
    <scope>BIOPHYSICOCHEMICAL PROPERTIES</scope>
    <scope>SUBCELLULAR LOCATION</scope>
    <scope>TISSUE SPECIFICITY</scope>
    <scope>DEVELOPMENTAL STAGE</scope>
</reference>
<feature type="chain" id="PRO_0000251947" description="Glycerophosphocholine phosphodiesterase GPCPD1">
    <location>
        <begin position="1"/>
        <end position="675"/>
    </location>
</feature>
<feature type="domain" description="CBM20" evidence="3">
    <location>
        <begin position="1"/>
        <end position="115"/>
    </location>
</feature>
<feature type="domain" description="GP-PDE">
    <location>
        <begin position="321"/>
        <end position="621"/>
    </location>
</feature>
<feature type="binding site" evidence="2">
    <location>
        <position position="70"/>
    </location>
    <ligand>
        <name>substrate</name>
    </ligand>
</feature>
<feature type="binding site" evidence="2">
    <location>
        <begin position="88"/>
        <end position="89"/>
    </location>
    <ligand>
        <name>substrate</name>
    </ligand>
</feature>
<feature type="modified residue" description="Phosphoserine" evidence="1">
    <location>
        <position position="178"/>
    </location>
</feature>
<feature type="modified residue" description="Phosphoserine" evidence="9">
    <location>
        <position position="427"/>
    </location>
</feature>
<feature type="modified residue" description="Phosphotyrosine" evidence="8">
    <location>
        <position position="611"/>
    </location>
</feature>
<feature type="splice variant" id="VSP_020819" description="In isoform 3." evidence="5">
    <location>
        <begin position="1"/>
        <end position="445"/>
    </location>
</feature>
<feature type="splice variant" id="VSP_020820" description="In isoform 2." evidence="6">
    <location>
        <begin position="1"/>
        <end position="184"/>
    </location>
</feature>
<feature type="sequence conflict" description="In Ref. 2; BAE38686." evidence="7" ref="2">
    <original>G</original>
    <variation>D</variation>
    <location>
        <position position="289"/>
    </location>
</feature>
<feature type="sequence conflict" description="In Ref. 2; BAC33775." evidence="7" ref="2">
    <original>E</original>
    <variation>Q</variation>
    <location>
        <position position="460"/>
    </location>
</feature>
<feature type="sequence conflict" description="In Ref. 2; BAC33775." evidence="7" ref="2">
    <original>LE</original>
    <variation>SQ</variation>
    <location>
        <begin position="494"/>
        <end position="495"/>
    </location>
</feature>
<feature type="sequence conflict" description="In Ref. 2; BAC33775." evidence="7" ref="2">
    <original>K</original>
    <variation>N</variation>
    <location>
        <position position="499"/>
    </location>
</feature>
<feature type="sequence conflict" description="In Ref. 2; BAB26361." evidence="7" ref="2">
    <original>L</original>
    <variation>S</variation>
    <location>
        <position position="559"/>
    </location>
</feature>
<feature type="sequence conflict" description="In Ref. 2; BAB26361." evidence="7" ref="2">
    <original>K</original>
    <variation>E</variation>
    <location>
        <position position="602"/>
    </location>
</feature>
<organism>
    <name type="scientific">Mus musculus</name>
    <name type="common">Mouse</name>
    <dbReference type="NCBI Taxonomy" id="10090"/>
    <lineage>
        <taxon>Eukaryota</taxon>
        <taxon>Metazoa</taxon>
        <taxon>Chordata</taxon>
        <taxon>Craniata</taxon>
        <taxon>Vertebrata</taxon>
        <taxon>Euteleostomi</taxon>
        <taxon>Mammalia</taxon>
        <taxon>Eutheria</taxon>
        <taxon>Euarchontoglires</taxon>
        <taxon>Glires</taxon>
        <taxon>Rodentia</taxon>
        <taxon>Myomorpha</taxon>
        <taxon>Muroidea</taxon>
        <taxon>Muridae</taxon>
        <taxon>Murinae</taxon>
        <taxon>Mus</taxon>
        <taxon>Mus</taxon>
    </lineage>
</organism>